<gene>
    <name type="primary">Med19</name>
</gene>
<evidence type="ECO:0000250" key="1"/>
<evidence type="ECO:0000250" key="2">
    <source>
        <dbReference type="UniProtKB" id="A0JLT2"/>
    </source>
</evidence>
<evidence type="ECO:0000256" key="3">
    <source>
        <dbReference type="SAM" id="MobiDB-lite"/>
    </source>
</evidence>
<evidence type="ECO:0000305" key="4"/>
<evidence type="ECO:0007744" key="5">
    <source>
    </source>
</evidence>
<proteinExistence type="evidence at protein level"/>
<reference key="1">
    <citation type="journal article" date="2005" name="Science">
        <title>The transcriptional landscape of the mammalian genome.</title>
        <authorList>
            <person name="Carninci P."/>
            <person name="Kasukawa T."/>
            <person name="Katayama S."/>
            <person name="Gough J."/>
            <person name="Frith M.C."/>
            <person name="Maeda N."/>
            <person name="Oyama R."/>
            <person name="Ravasi T."/>
            <person name="Lenhard B."/>
            <person name="Wells C."/>
            <person name="Kodzius R."/>
            <person name="Shimokawa K."/>
            <person name="Bajic V.B."/>
            <person name="Brenner S.E."/>
            <person name="Batalov S."/>
            <person name="Forrest A.R."/>
            <person name="Zavolan M."/>
            <person name="Davis M.J."/>
            <person name="Wilming L.G."/>
            <person name="Aidinis V."/>
            <person name="Allen J.E."/>
            <person name="Ambesi-Impiombato A."/>
            <person name="Apweiler R."/>
            <person name="Aturaliya R.N."/>
            <person name="Bailey T.L."/>
            <person name="Bansal M."/>
            <person name="Baxter L."/>
            <person name="Beisel K.W."/>
            <person name="Bersano T."/>
            <person name="Bono H."/>
            <person name="Chalk A.M."/>
            <person name="Chiu K.P."/>
            <person name="Choudhary V."/>
            <person name="Christoffels A."/>
            <person name="Clutterbuck D.R."/>
            <person name="Crowe M.L."/>
            <person name="Dalla E."/>
            <person name="Dalrymple B.P."/>
            <person name="de Bono B."/>
            <person name="Della Gatta G."/>
            <person name="di Bernardo D."/>
            <person name="Down T."/>
            <person name="Engstrom P."/>
            <person name="Fagiolini M."/>
            <person name="Faulkner G."/>
            <person name="Fletcher C.F."/>
            <person name="Fukushima T."/>
            <person name="Furuno M."/>
            <person name="Futaki S."/>
            <person name="Gariboldi M."/>
            <person name="Georgii-Hemming P."/>
            <person name="Gingeras T.R."/>
            <person name="Gojobori T."/>
            <person name="Green R.E."/>
            <person name="Gustincich S."/>
            <person name="Harbers M."/>
            <person name="Hayashi Y."/>
            <person name="Hensch T.K."/>
            <person name="Hirokawa N."/>
            <person name="Hill D."/>
            <person name="Huminiecki L."/>
            <person name="Iacono M."/>
            <person name="Ikeo K."/>
            <person name="Iwama A."/>
            <person name="Ishikawa T."/>
            <person name="Jakt M."/>
            <person name="Kanapin A."/>
            <person name="Katoh M."/>
            <person name="Kawasawa Y."/>
            <person name="Kelso J."/>
            <person name="Kitamura H."/>
            <person name="Kitano H."/>
            <person name="Kollias G."/>
            <person name="Krishnan S.P."/>
            <person name="Kruger A."/>
            <person name="Kummerfeld S.K."/>
            <person name="Kurochkin I.V."/>
            <person name="Lareau L.F."/>
            <person name="Lazarevic D."/>
            <person name="Lipovich L."/>
            <person name="Liu J."/>
            <person name="Liuni S."/>
            <person name="McWilliam S."/>
            <person name="Madan Babu M."/>
            <person name="Madera M."/>
            <person name="Marchionni L."/>
            <person name="Matsuda H."/>
            <person name="Matsuzawa S."/>
            <person name="Miki H."/>
            <person name="Mignone F."/>
            <person name="Miyake S."/>
            <person name="Morris K."/>
            <person name="Mottagui-Tabar S."/>
            <person name="Mulder N."/>
            <person name="Nakano N."/>
            <person name="Nakauchi H."/>
            <person name="Ng P."/>
            <person name="Nilsson R."/>
            <person name="Nishiguchi S."/>
            <person name="Nishikawa S."/>
            <person name="Nori F."/>
            <person name="Ohara O."/>
            <person name="Okazaki Y."/>
            <person name="Orlando V."/>
            <person name="Pang K.C."/>
            <person name="Pavan W.J."/>
            <person name="Pavesi G."/>
            <person name="Pesole G."/>
            <person name="Petrovsky N."/>
            <person name="Piazza S."/>
            <person name="Reed J."/>
            <person name="Reid J.F."/>
            <person name="Ring B.Z."/>
            <person name="Ringwald M."/>
            <person name="Rost B."/>
            <person name="Ruan Y."/>
            <person name="Salzberg S.L."/>
            <person name="Sandelin A."/>
            <person name="Schneider C."/>
            <person name="Schoenbach C."/>
            <person name="Sekiguchi K."/>
            <person name="Semple C.A."/>
            <person name="Seno S."/>
            <person name="Sessa L."/>
            <person name="Sheng Y."/>
            <person name="Shibata Y."/>
            <person name="Shimada H."/>
            <person name="Shimada K."/>
            <person name="Silva D."/>
            <person name="Sinclair B."/>
            <person name="Sperling S."/>
            <person name="Stupka E."/>
            <person name="Sugiura K."/>
            <person name="Sultana R."/>
            <person name="Takenaka Y."/>
            <person name="Taki K."/>
            <person name="Tammoja K."/>
            <person name="Tan S.L."/>
            <person name="Tang S."/>
            <person name="Taylor M.S."/>
            <person name="Tegner J."/>
            <person name="Teichmann S.A."/>
            <person name="Ueda H.R."/>
            <person name="van Nimwegen E."/>
            <person name="Verardo R."/>
            <person name="Wei C.L."/>
            <person name="Yagi K."/>
            <person name="Yamanishi H."/>
            <person name="Zabarovsky E."/>
            <person name="Zhu S."/>
            <person name="Zimmer A."/>
            <person name="Hide W."/>
            <person name="Bult C."/>
            <person name="Grimmond S.M."/>
            <person name="Teasdale R.D."/>
            <person name="Liu E.T."/>
            <person name="Brusic V."/>
            <person name="Quackenbush J."/>
            <person name="Wahlestedt C."/>
            <person name="Mattick J.S."/>
            <person name="Hume D.A."/>
            <person name="Kai C."/>
            <person name="Sasaki D."/>
            <person name="Tomaru Y."/>
            <person name="Fukuda S."/>
            <person name="Kanamori-Katayama M."/>
            <person name="Suzuki M."/>
            <person name="Aoki J."/>
            <person name="Arakawa T."/>
            <person name="Iida J."/>
            <person name="Imamura K."/>
            <person name="Itoh M."/>
            <person name="Kato T."/>
            <person name="Kawaji H."/>
            <person name="Kawagashira N."/>
            <person name="Kawashima T."/>
            <person name="Kojima M."/>
            <person name="Kondo S."/>
            <person name="Konno H."/>
            <person name="Nakano K."/>
            <person name="Ninomiya N."/>
            <person name="Nishio T."/>
            <person name="Okada M."/>
            <person name="Plessy C."/>
            <person name="Shibata K."/>
            <person name="Shiraki T."/>
            <person name="Suzuki S."/>
            <person name="Tagami M."/>
            <person name="Waki K."/>
            <person name="Watahiki A."/>
            <person name="Okamura-Oho Y."/>
            <person name="Suzuki H."/>
            <person name="Kawai J."/>
            <person name="Hayashizaki Y."/>
        </authorList>
    </citation>
    <scope>NUCLEOTIDE SEQUENCE [LARGE SCALE MRNA]</scope>
    <source>
        <strain>C57BL/6J</strain>
        <tissue>Embryonic stem cell</tissue>
        <tissue>Heart</tissue>
        <tissue>Placenta</tissue>
    </source>
</reference>
<reference key="2">
    <citation type="journal article" date="2004" name="Genome Res.">
        <title>The status, quality, and expansion of the NIH full-length cDNA project: the Mammalian Gene Collection (MGC).</title>
        <authorList>
            <consortium name="The MGC Project Team"/>
        </authorList>
    </citation>
    <scope>NUCLEOTIDE SEQUENCE [LARGE SCALE MRNA]</scope>
    <source>
        <strain>C57BL/6J</strain>
        <strain>FVB/N</strain>
        <tissue>Eye</tissue>
        <tissue>Liver</tissue>
        <tissue>Mammary tumor</tissue>
    </source>
</reference>
<reference key="3">
    <citation type="journal article" date="2010" name="Cell">
        <title>A tissue-specific atlas of mouse protein phosphorylation and expression.</title>
        <authorList>
            <person name="Huttlin E.L."/>
            <person name="Jedrychowski M.P."/>
            <person name="Elias J.E."/>
            <person name="Goswami T."/>
            <person name="Rad R."/>
            <person name="Beausoleil S.A."/>
            <person name="Villen J."/>
            <person name="Haas W."/>
            <person name="Sowa M.E."/>
            <person name="Gygi S.P."/>
        </authorList>
    </citation>
    <scope>PHOSPHORYLATION [LARGE SCALE ANALYSIS] AT SER-226</scope>
    <scope>IDENTIFICATION BY MASS SPECTROMETRY [LARGE SCALE ANALYSIS]</scope>
    <source>
        <tissue>Brown adipose tissue</tissue>
        <tissue>Kidney</tissue>
        <tissue>Spleen</tissue>
    </source>
</reference>
<sequence>MENFTALFGAQTDPPPPPSALGFGPGKPPPPPPPPPGGGPGAAPPSTATSAPAGADKSTAGSGPFYLMRELPGSTELTGSTNLITHYNLEQAYNKFCGKKVKEKLSNFLPDLPGMIDLPGSHDNSSLRSLIEKPPILGGSFNPITGTMLSGFRLHTGPLPEQCRLMHIQPPKKKNKHKHKQSRTQDPVPPETPSDSDHKKKKKKKEEDPERKRKKKEKKKKKNRHSPDHPGMGSSQASSSSSLR</sequence>
<organism>
    <name type="scientific">Mus musculus</name>
    <name type="common">Mouse</name>
    <dbReference type="NCBI Taxonomy" id="10090"/>
    <lineage>
        <taxon>Eukaryota</taxon>
        <taxon>Metazoa</taxon>
        <taxon>Chordata</taxon>
        <taxon>Craniata</taxon>
        <taxon>Vertebrata</taxon>
        <taxon>Euteleostomi</taxon>
        <taxon>Mammalia</taxon>
        <taxon>Eutheria</taxon>
        <taxon>Euarchontoglires</taxon>
        <taxon>Glires</taxon>
        <taxon>Rodentia</taxon>
        <taxon>Myomorpha</taxon>
        <taxon>Muroidea</taxon>
        <taxon>Muridae</taxon>
        <taxon>Murinae</taxon>
        <taxon>Mus</taxon>
        <taxon>Mus</taxon>
    </lineage>
</organism>
<keyword id="KW-0002">3D-structure</keyword>
<keyword id="KW-0010">Activator</keyword>
<keyword id="KW-0539">Nucleus</keyword>
<keyword id="KW-0597">Phosphoprotein</keyword>
<keyword id="KW-1185">Reference proteome</keyword>
<keyword id="KW-0804">Transcription</keyword>
<keyword id="KW-0805">Transcription regulation</keyword>
<name>MED19_MOUSE</name>
<comment type="function">
    <text evidence="1">Component of the Mediator complex, a coactivator involved in the regulated transcription of nearly all RNA polymerase II-dependent genes. Mediator functions as a bridge to convey information from gene-specific regulatory proteins to the basal RNA polymerase II transcription machinery. Mediator is recruited to promoters by direct interactions with regulatory proteins and serves as a scaffold for the assembly of a functional preinitiation complex with RNA polymerase II and the general transcription factors (By similarity).</text>
</comment>
<comment type="subunit">
    <text evidence="1">Component of the Mediator complex, which is composed of MED1, MED4, MED6, MED7, MED8, MED9, MED10, MED11, MED12, MED13, MED13L, MED14, MED15, MED16, MED17, MED18, MED19, MED20, MED21, MED22, MED23, MED24, MED25, MED26, MED27, MED29, MED30, MED31, CCNC, CDK8 and CDC2L6/CDK11. The MED12, MED13, CCNC and CDK8 subunits form a distinct module termed the CDK8 module. Mediator containing the CDK8 module is less active than Mediator lacking this module in supporting transcriptional activation. Individual preparations of the Mediator complex lacking one or more distinct subunits have been variously termed ARC, CRSP, DRIP, PC2, SMCC and TRAP (By similarity).</text>
</comment>
<comment type="interaction">
    <interactant intactId="EBI-398761">
        <id>Q8C1S0</id>
    </interactant>
    <interactant intactId="EBI-309355">
        <id>Q9CXU1</id>
        <label>Med31</label>
    </interactant>
    <organismsDiffer>false</organismsDiffer>
    <experiments>2</experiments>
</comment>
<comment type="interaction">
    <interactant intactId="EBI-398761">
        <id>Q8C1S0</id>
    </interactant>
    <interactant intactId="EBI-394392">
        <id>O95402</id>
        <label>MED26</label>
    </interactant>
    <organismsDiffer>true</organismsDiffer>
    <experiments>2</experiments>
</comment>
<comment type="subcellular location">
    <subcellularLocation>
        <location evidence="4">Nucleus</location>
    </subcellularLocation>
</comment>
<comment type="similarity">
    <text evidence="4">Belongs to the Mediator complex subunit 19 family.</text>
</comment>
<accession>Q8C1S0</accession>
<accession>Q80XM2</accession>
<accession>Q8R3G3</accession>
<protein>
    <recommendedName>
        <fullName>Mediator of RNA polymerase II transcription subunit 19</fullName>
    </recommendedName>
    <alternativeName>
        <fullName>Mediator complex subunit 19</fullName>
    </alternativeName>
</protein>
<feature type="chain" id="PRO_0000304767" description="Mediator of RNA polymerase II transcription subunit 19">
    <location>
        <begin position="1"/>
        <end position="244"/>
    </location>
</feature>
<feature type="region of interest" description="Disordered" evidence="3">
    <location>
        <begin position="1"/>
        <end position="67"/>
    </location>
</feature>
<feature type="region of interest" description="Disordered" evidence="3">
    <location>
        <begin position="171"/>
        <end position="244"/>
    </location>
</feature>
<feature type="compositionally biased region" description="Pro residues" evidence="3">
    <location>
        <begin position="26"/>
        <end position="38"/>
    </location>
</feature>
<feature type="compositionally biased region" description="Low complexity" evidence="3">
    <location>
        <begin position="44"/>
        <end position="55"/>
    </location>
</feature>
<feature type="compositionally biased region" description="Basic residues" evidence="3">
    <location>
        <begin position="171"/>
        <end position="182"/>
    </location>
</feature>
<feature type="compositionally biased region" description="Basic residues" evidence="3">
    <location>
        <begin position="212"/>
        <end position="224"/>
    </location>
</feature>
<feature type="compositionally biased region" description="Low complexity" evidence="3">
    <location>
        <begin position="234"/>
        <end position="244"/>
    </location>
</feature>
<feature type="modified residue" description="Phosphoserine" evidence="2">
    <location>
        <position position="194"/>
    </location>
</feature>
<feature type="modified residue" description="Phosphoserine" evidence="5">
    <location>
        <position position="226"/>
    </location>
</feature>
<feature type="sequence conflict" description="In Ref. 2; AAH25475." evidence="4" ref="2">
    <original>SLIEKPPILGGS</original>
    <variation>HASAHASAHASA</variation>
    <location>
        <begin position="129"/>
        <end position="140"/>
    </location>
</feature>
<dbReference type="EMBL" id="AK005399">
    <property type="protein sequence ID" value="BAC25114.1"/>
    <property type="molecule type" value="mRNA"/>
</dbReference>
<dbReference type="EMBL" id="AK160579">
    <property type="protein sequence ID" value="BAE35886.1"/>
    <property type="molecule type" value="mRNA"/>
</dbReference>
<dbReference type="EMBL" id="AK168787">
    <property type="protein sequence ID" value="BAE40621.1"/>
    <property type="molecule type" value="mRNA"/>
</dbReference>
<dbReference type="EMBL" id="BC025475">
    <property type="protein sequence ID" value="AAH25475.1"/>
    <property type="molecule type" value="mRNA"/>
</dbReference>
<dbReference type="EMBL" id="BC044207">
    <property type="protein sequence ID" value="AAH44207.1"/>
    <property type="molecule type" value="mRNA"/>
</dbReference>
<dbReference type="EMBL" id="BC082559">
    <property type="protein sequence ID" value="AAH82559.1"/>
    <property type="molecule type" value="mRNA"/>
</dbReference>
<dbReference type="CCDS" id="CCDS16189.1"/>
<dbReference type="RefSeq" id="NP_080161.1">
    <property type="nucleotide sequence ID" value="NM_025885.4"/>
</dbReference>
<dbReference type="PDB" id="6W1S">
    <property type="method" value="EM"/>
    <property type="resolution" value="4.02 A"/>
    <property type="chains" value="N=1-244"/>
</dbReference>
<dbReference type="PDB" id="8T1I">
    <property type="method" value="EM"/>
    <property type="resolution" value="4.68 A"/>
    <property type="chains" value="N=1-240"/>
</dbReference>
<dbReference type="PDBsum" id="6W1S"/>
<dbReference type="PDBsum" id="8T1I"/>
<dbReference type="EMDB" id="EMD-21514"/>
<dbReference type="EMDB" id="EMD-40968"/>
<dbReference type="SMR" id="Q8C1S0"/>
<dbReference type="BioGRID" id="237911">
    <property type="interactions" value="3"/>
</dbReference>
<dbReference type="ComplexPortal" id="CPX-3264">
    <property type="entry name" value="Core mediator complex"/>
</dbReference>
<dbReference type="FunCoup" id="Q8C1S0">
    <property type="interactions" value="3834"/>
</dbReference>
<dbReference type="IntAct" id="Q8C1S0">
    <property type="interactions" value="10"/>
</dbReference>
<dbReference type="STRING" id="10090.ENSMUSP00000099705"/>
<dbReference type="iPTMnet" id="Q8C1S0"/>
<dbReference type="PhosphoSitePlus" id="Q8C1S0"/>
<dbReference type="PaxDb" id="10090-ENSMUSP00000099705"/>
<dbReference type="PeptideAtlas" id="Q8C1S0"/>
<dbReference type="ProteomicsDB" id="295850"/>
<dbReference type="Pumba" id="Q8C1S0"/>
<dbReference type="Antibodypedia" id="43279">
    <property type="antibodies" value="161 antibodies from 21 providers"/>
</dbReference>
<dbReference type="Ensembl" id="ENSMUST00000102645.4">
    <property type="protein sequence ID" value="ENSMUSP00000099705.4"/>
    <property type="gene ID" value="ENSMUSG00000027080.7"/>
</dbReference>
<dbReference type="GeneID" id="381379"/>
<dbReference type="KEGG" id="mmu:381379"/>
<dbReference type="UCSC" id="uc008kiy.2">
    <property type="organism name" value="mouse"/>
</dbReference>
<dbReference type="AGR" id="MGI:1914234"/>
<dbReference type="CTD" id="219541"/>
<dbReference type="MGI" id="MGI:1914234">
    <property type="gene designation" value="Med19"/>
</dbReference>
<dbReference type="VEuPathDB" id="HostDB:ENSMUSG00000027080"/>
<dbReference type="eggNOG" id="KOG4043">
    <property type="taxonomic scope" value="Eukaryota"/>
</dbReference>
<dbReference type="GeneTree" id="ENSGT00390000001774"/>
<dbReference type="HOGENOM" id="CLU_098332_0_0_1"/>
<dbReference type="InParanoid" id="Q8C1S0"/>
<dbReference type="OMA" id="QRFCGSK"/>
<dbReference type="OrthoDB" id="10044050at2759"/>
<dbReference type="PhylomeDB" id="Q8C1S0"/>
<dbReference type="TreeFam" id="TF317417"/>
<dbReference type="BioGRID-ORCS" id="381379">
    <property type="hits" value="11 hits in 79 CRISPR screens"/>
</dbReference>
<dbReference type="CD-CODE" id="CB5AE2BC">
    <property type="entry name" value="Synthetic Condensate 000337"/>
</dbReference>
<dbReference type="ChiTaRS" id="Med19">
    <property type="organism name" value="mouse"/>
</dbReference>
<dbReference type="PRO" id="PR:Q8C1S0"/>
<dbReference type="Proteomes" id="UP000000589">
    <property type="component" value="Chromosome 2"/>
</dbReference>
<dbReference type="RNAct" id="Q8C1S0">
    <property type="molecule type" value="protein"/>
</dbReference>
<dbReference type="Bgee" id="ENSMUSG00000027080">
    <property type="expression patterns" value="Expressed in floor plate of midbrain and 251 other cell types or tissues"/>
</dbReference>
<dbReference type="GO" id="GO:0070847">
    <property type="term" value="C:core mediator complex"/>
    <property type="evidence" value="ECO:0000266"/>
    <property type="project" value="ComplexPortal"/>
</dbReference>
<dbReference type="GO" id="GO:0016592">
    <property type="term" value="C:mediator complex"/>
    <property type="evidence" value="ECO:0000314"/>
    <property type="project" value="MGI"/>
</dbReference>
<dbReference type="GO" id="GO:0005654">
    <property type="term" value="C:nucleoplasm"/>
    <property type="evidence" value="ECO:0000304"/>
    <property type="project" value="Reactome"/>
</dbReference>
<dbReference type="GO" id="GO:0005634">
    <property type="term" value="C:nucleus"/>
    <property type="evidence" value="ECO:0000266"/>
    <property type="project" value="ComplexPortal"/>
</dbReference>
<dbReference type="GO" id="GO:0003712">
    <property type="term" value="F:transcription coregulator activity"/>
    <property type="evidence" value="ECO:0007669"/>
    <property type="project" value="InterPro"/>
</dbReference>
<dbReference type="GO" id="GO:0032968">
    <property type="term" value="P:positive regulation of transcription elongation by RNA polymerase II"/>
    <property type="evidence" value="ECO:0000303"/>
    <property type="project" value="ComplexPortal"/>
</dbReference>
<dbReference type="GO" id="GO:0060261">
    <property type="term" value="P:positive regulation of transcription initiation by RNA polymerase II"/>
    <property type="evidence" value="ECO:0000303"/>
    <property type="project" value="ComplexPortal"/>
</dbReference>
<dbReference type="GO" id="GO:0051123">
    <property type="term" value="P:RNA polymerase II preinitiation complex assembly"/>
    <property type="evidence" value="ECO:0000303"/>
    <property type="project" value="ComplexPortal"/>
</dbReference>
<dbReference type="InterPro" id="IPR019403">
    <property type="entry name" value="Mediator_Med19_met"/>
</dbReference>
<dbReference type="PANTHER" id="PTHR22536">
    <property type="entry name" value="LUNG CANCER METASTASIS-RELATED LCMR1 PROTEIN"/>
    <property type="match status" value="1"/>
</dbReference>
<dbReference type="PANTHER" id="PTHR22536:SF1">
    <property type="entry name" value="MEDIATOR OF RNA POLYMERASE II TRANSCRIPTION SUBUNIT 19"/>
    <property type="match status" value="1"/>
</dbReference>
<dbReference type="Pfam" id="PF10278">
    <property type="entry name" value="Med19"/>
    <property type="match status" value="1"/>
</dbReference>